<comment type="function">
    <text evidence="1 5 8 9 10 11 12 14">Mast cell-specific receptor for basic secretagogues, i.e. cationic amphiphilic drugs, as well as endo- or exogenous peptides, consisting of a basic head group and a hydrophobic core (PubMed:25517090). Recognizes and binds small molecules containing a cyclized tetrahydroisoquinoline (THIQ), such as non-steroidal neuromuscular blocking drugs (NMBDs), including tubocurarine and atracurium. In response to these compounds, mediates pseudo-allergic reactions characterized by histamine release, inflammation and airway contraction (By similarity). Acts as a receptor for a number of other ligands, including peptides and alkaloids, such as cortistatin-14, proadrenomedullin N-terminal peptides PAMP-12 and, at lower extent, PAMP-20, antibacterial protein LL-37, PMX-53 peptide, beta-defensins, and complanadine A.</text>
</comment>
<comment type="subcellular location">
    <subcellularLocation>
        <location>Cell membrane</location>
        <topology evidence="2">Multi-pass membrane protein</topology>
    </subcellularLocation>
</comment>
<comment type="tissue specificity">
    <text evidence="4 7">Mainly expressed in mast cells. Has a limited expression profile, both peripheral and within the central nervous system, with highest levels in dorsal root ganglion (PubMed:12915402). Detected in blood vessels, scattered lymphocytes, and gastrointestinal ganglia (at protein level) (PubMed:16161007).</text>
</comment>
<comment type="similarity">
    <text evidence="3">Belongs to the G-protein coupled receptor 1 family. Mas subfamily.</text>
</comment>
<name>MRGX2_HUMAN</name>
<dbReference type="EMBL" id="AY042214">
    <property type="protein sequence ID" value="AAK91805.1"/>
    <property type="molecule type" value="Genomic_DNA"/>
</dbReference>
<dbReference type="EMBL" id="HG426071">
    <property type="protein sequence ID" value="CDG86189.1"/>
    <property type="molecule type" value="Genomic_DNA"/>
</dbReference>
<dbReference type="EMBL" id="AY651130">
    <property type="protein sequence ID" value="AAW70043.1"/>
    <property type="molecule type" value="Genomic_DNA"/>
</dbReference>
<dbReference type="EMBL" id="AY651131">
    <property type="protein sequence ID" value="AAW70044.1"/>
    <property type="molecule type" value="Genomic_DNA"/>
</dbReference>
<dbReference type="EMBL" id="AY651132">
    <property type="protein sequence ID" value="AAW70045.1"/>
    <property type="molecule type" value="Genomic_DNA"/>
</dbReference>
<dbReference type="EMBL" id="AY651133">
    <property type="protein sequence ID" value="AAW70046.1"/>
    <property type="molecule type" value="Genomic_DNA"/>
</dbReference>
<dbReference type="EMBL" id="AY651134">
    <property type="protein sequence ID" value="AAW70047.1"/>
    <property type="molecule type" value="Genomic_DNA"/>
</dbReference>
<dbReference type="EMBL" id="AY651135">
    <property type="protein sequence ID" value="AAW70048.1"/>
    <property type="molecule type" value="Genomic_DNA"/>
</dbReference>
<dbReference type="EMBL" id="AY651136">
    <property type="protein sequence ID" value="AAW70049.1"/>
    <property type="molecule type" value="Genomic_DNA"/>
</dbReference>
<dbReference type="EMBL" id="AY651137">
    <property type="protein sequence ID" value="AAW70050.1"/>
    <property type="molecule type" value="Genomic_DNA"/>
</dbReference>
<dbReference type="EMBL" id="AY651138">
    <property type="protein sequence ID" value="AAW70051.1"/>
    <property type="molecule type" value="Genomic_DNA"/>
</dbReference>
<dbReference type="EMBL" id="AY651139">
    <property type="protein sequence ID" value="AAW70052.1"/>
    <property type="molecule type" value="Genomic_DNA"/>
</dbReference>
<dbReference type="EMBL" id="AY651140">
    <property type="protein sequence ID" value="AAW70053.1"/>
    <property type="molecule type" value="Genomic_DNA"/>
</dbReference>
<dbReference type="EMBL" id="AY651141">
    <property type="protein sequence ID" value="AAW70054.1"/>
    <property type="molecule type" value="Genomic_DNA"/>
</dbReference>
<dbReference type="EMBL" id="AY651142">
    <property type="protein sequence ID" value="AAW70055.1"/>
    <property type="molecule type" value="Genomic_DNA"/>
</dbReference>
<dbReference type="EMBL" id="AY651143">
    <property type="protein sequence ID" value="AAW70056.1"/>
    <property type="molecule type" value="Genomic_DNA"/>
</dbReference>
<dbReference type="EMBL" id="AY651144">
    <property type="protein sequence ID" value="AAW70057.1"/>
    <property type="molecule type" value="Genomic_DNA"/>
</dbReference>
<dbReference type="EMBL" id="AY651145">
    <property type="protein sequence ID" value="AAW70058.1"/>
    <property type="molecule type" value="Genomic_DNA"/>
</dbReference>
<dbReference type="EMBL" id="AY651146">
    <property type="protein sequence ID" value="AAW70059.1"/>
    <property type="molecule type" value="Genomic_DNA"/>
</dbReference>
<dbReference type="EMBL" id="AY651147">
    <property type="protein sequence ID" value="AAW70060.1"/>
    <property type="molecule type" value="Genomic_DNA"/>
</dbReference>
<dbReference type="EMBL" id="AY651148">
    <property type="protein sequence ID" value="AAW70061.1"/>
    <property type="molecule type" value="Genomic_DNA"/>
</dbReference>
<dbReference type="EMBL" id="AY651149">
    <property type="protein sequence ID" value="AAW70062.1"/>
    <property type="molecule type" value="Genomic_DNA"/>
</dbReference>
<dbReference type="EMBL" id="AY651150">
    <property type="protein sequence ID" value="AAW70063.1"/>
    <property type="molecule type" value="Genomic_DNA"/>
</dbReference>
<dbReference type="EMBL" id="AY651151">
    <property type="protein sequence ID" value="AAW70064.1"/>
    <property type="molecule type" value="Genomic_DNA"/>
</dbReference>
<dbReference type="EMBL" id="AY651152">
    <property type="protein sequence ID" value="AAW70065.1"/>
    <property type="molecule type" value="Genomic_DNA"/>
</dbReference>
<dbReference type="EMBL" id="AY651153">
    <property type="protein sequence ID" value="AAW70066.1"/>
    <property type="molecule type" value="Genomic_DNA"/>
</dbReference>
<dbReference type="EMBL" id="AY651154">
    <property type="protein sequence ID" value="AAW70067.1"/>
    <property type="molecule type" value="Genomic_DNA"/>
</dbReference>
<dbReference type="EMBL" id="AY651155">
    <property type="protein sequence ID" value="AAW70068.1"/>
    <property type="molecule type" value="Genomic_DNA"/>
</dbReference>
<dbReference type="EMBL" id="AY651156">
    <property type="protein sequence ID" value="AAW70069.1"/>
    <property type="molecule type" value="Genomic_DNA"/>
</dbReference>
<dbReference type="EMBL" id="AY651157">
    <property type="protein sequence ID" value="AAW70070.1"/>
    <property type="molecule type" value="Genomic_DNA"/>
</dbReference>
<dbReference type="EMBL" id="AY651158">
    <property type="protein sequence ID" value="AAW70071.1"/>
    <property type="molecule type" value="Genomic_DNA"/>
</dbReference>
<dbReference type="EMBL" id="AY651159">
    <property type="protein sequence ID" value="AAW70072.1"/>
    <property type="molecule type" value="Genomic_DNA"/>
</dbReference>
<dbReference type="EMBL" id="AY651160">
    <property type="protein sequence ID" value="AAW70073.1"/>
    <property type="molecule type" value="Genomic_DNA"/>
</dbReference>
<dbReference type="EMBL" id="AY651161">
    <property type="protein sequence ID" value="AAW70074.1"/>
    <property type="molecule type" value="Genomic_DNA"/>
</dbReference>
<dbReference type="EMBL" id="AY845175">
    <property type="protein sequence ID" value="AAW70082.1"/>
    <property type="molecule type" value="Genomic_DNA"/>
</dbReference>
<dbReference type="EMBL" id="AY845176">
    <property type="protein sequence ID" value="AAW70083.1"/>
    <property type="molecule type" value="Genomic_DNA"/>
</dbReference>
<dbReference type="EMBL" id="EU883579">
    <property type="protein sequence ID" value="ACG60653.1"/>
    <property type="molecule type" value="Genomic_DNA"/>
</dbReference>
<dbReference type="EMBL" id="AB083626">
    <property type="protein sequence ID" value="BAB89339.1"/>
    <property type="molecule type" value="Genomic_DNA"/>
</dbReference>
<dbReference type="EMBL" id="AB065811">
    <property type="protein sequence ID" value="BAC06030.1"/>
    <property type="molecule type" value="Genomic_DNA"/>
</dbReference>
<dbReference type="EMBL" id="CH471064">
    <property type="protein sequence ID" value="EAW68359.1"/>
    <property type="molecule type" value="Genomic_DNA"/>
</dbReference>
<dbReference type="EMBL" id="BC063450">
    <property type="protein sequence ID" value="AAH63450.1"/>
    <property type="molecule type" value="mRNA"/>
</dbReference>
<dbReference type="CCDS" id="CCDS7847.1"/>
<dbReference type="RefSeq" id="NP_001290544.1">
    <property type="nucleotide sequence ID" value="NM_001303615.2"/>
</dbReference>
<dbReference type="RefSeq" id="NP_473371.1">
    <property type="nucleotide sequence ID" value="NM_054030.4"/>
</dbReference>
<dbReference type="PDB" id="7S8L">
    <property type="method" value="EM"/>
    <property type="resolution" value="2.45 A"/>
    <property type="chains" value="R=2-330"/>
</dbReference>
<dbReference type="PDB" id="7S8M">
    <property type="method" value="EM"/>
    <property type="resolution" value="2.54 A"/>
    <property type="chains" value="R=2-330"/>
</dbReference>
<dbReference type="PDB" id="7S8N">
    <property type="method" value="EM"/>
    <property type="resolution" value="2.90 A"/>
    <property type="chains" value="R=2-330"/>
</dbReference>
<dbReference type="PDB" id="7S8O">
    <property type="method" value="EM"/>
    <property type="resolution" value="2.58 A"/>
    <property type="chains" value="R=2-330"/>
</dbReference>
<dbReference type="PDB" id="7VDH">
    <property type="method" value="EM"/>
    <property type="resolution" value="2.90 A"/>
    <property type="chains" value="R=1-330"/>
</dbReference>
<dbReference type="PDB" id="7VDL">
    <property type="method" value="EM"/>
    <property type="resolution" value="3.22 A"/>
    <property type="chains" value="R=1-330"/>
</dbReference>
<dbReference type="PDB" id="7VDM">
    <property type="method" value="EM"/>
    <property type="resolution" value="2.98 A"/>
    <property type="chains" value="R=1-330"/>
</dbReference>
<dbReference type="PDB" id="7VUY">
    <property type="method" value="EM"/>
    <property type="resolution" value="2.84 A"/>
    <property type="chains" value="R=1-330"/>
</dbReference>
<dbReference type="PDB" id="7VUZ">
    <property type="method" value="EM"/>
    <property type="resolution" value="2.89 A"/>
    <property type="chains" value="R=1-330"/>
</dbReference>
<dbReference type="PDB" id="7VV0">
    <property type="method" value="EM"/>
    <property type="resolution" value="3.50 A"/>
    <property type="chains" value="R=1-330"/>
</dbReference>
<dbReference type="PDB" id="7VV3">
    <property type="method" value="EM"/>
    <property type="resolution" value="2.97 A"/>
    <property type="chains" value="R=1-330"/>
</dbReference>
<dbReference type="PDB" id="7VV4">
    <property type="method" value="EM"/>
    <property type="resolution" value="2.97 A"/>
    <property type="chains" value="R=1-330"/>
</dbReference>
<dbReference type="PDB" id="7VV5">
    <property type="method" value="EM"/>
    <property type="resolution" value="2.76 A"/>
    <property type="chains" value="R=1-330"/>
</dbReference>
<dbReference type="PDB" id="7VV6">
    <property type="method" value="EM"/>
    <property type="resolution" value="3.30 A"/>
    <property type="chains" value="R=1-330"/>
</dbReference>
<dbReference type="PDBsum" id="7S8L"/>
<dbReference type="PDBsum" id="7S8M"/>
<dbReference type="PDBsum" id="7S8N"/>
<dbReference type="PDBsum" id="7S8O"/>
<dbReference type="PDBsum" id="7VDH"/>
<dbReference type="PDBsum" id="7VDL"/>
<dbReference type="PDBsum" id="7VDM"/>
<dbReference type="PDBsum" id="7VUY"/>
<dbReference type="PDBsum" id="7VUZ"/>
<dbReference type="PDBsum" id="7VV0"/>
<dbReference type="PDBsum" id="7VV3"/>
<dbReference type="PDBsum" id="7VV4"/>
<dbReference type="PDBsum" id="7VV5"/>
<dbReference type="PDBsum" id="7VV6"/>
<dbReference type="EMDB" id="EMD-24896"/>
<dbReference type="EMDB" id="EMD-24897"/>
<dbReference type="EMDB" id="EMD-24898"/>
<dbReference type="EMDB" id="EMD-24899"/>
<dbReference type="EMDB" id="EMD-31918"/>
<dbReference type="EMDB" id="EMD-31922"/>
<dbReference type="EMDB" id="EMD-31923"/>
<dbReference type="EMDB" id="EMD-32131"/>
<dbReference type="EMDB" id="EMD-32132"/>
<dbReference type="EMDB" id="EMD-32133"/>
<dbReference type="EMDB" id="EMD-32136"/>
<dbReference type="EMDB" id="EMD-32137"/>
<dbReference type="EMDB" id="EMD-32138"/>
<dbReference type="EMDB" id="EMD-32139"/>
<dbReference type="SMR" id="Q96LB1"/>
<dbReference type="FunCoup" id="Q96LB1">
    <property type="interactions" value="269"/>
</dbReference>
<dbReference type="IntAct" id="Q96LB1">
    <property type="interactions" value="1"/>
</dbReference>
<dbReference type="STRING" id="9606.ENSP00000333800"/>
<dbReference type="BindingDB" id="Q96LB1"/>
<dbReference type="ChEMBL" id="CHEMBL5849"/>
<dbReference type="GuidetoPHARMACOLOGY" id="157"/>
<dbReference type="BioMuta" id="MRGPRX2"/>
<dbReference type="DMDM" id="50401127"/>
<dbReference type="MassIVE" id="Q96LB1"/>
<dbReference type="PaxDb" id="9606-ENSP00000333800"/>
<dbReference type="PeptideAtlas" id="Q96LB1"/>
<dbReference type="Antibodypedia" id="12419">
    <property type="antibodies" value="265 antibodies from 29 providers"/>
</dbReference>
<dbReference type="DNASU" id="117194"/>
<dbReference type="Ensembl" id="ENST00000329773.3">
    <property type="protein sequence ID" value="ENSP00000333800.2"/>
    <property type="gene ID" value="ENSG00000183695.3"/>
</dbReference>
<dbReference type="GeneID" id="117194"/>
<dbReference type="KEGG" id="hsa:117194"/>
<dbReference type="MANE-Select" id="ENST00000329773.3">
    <property type="protein sequence ID" value="ENSP00000333800.2"/>
    <property type="RefSeq nucleotide sequence ID" value="NM_054030.4"/>
    <property type="RefSeq protein sequence ID" value="NP_473371.1"/>
</dbReference>
<dbReference type="UCSC" id="uc001mph.4">
    <property type="organism name" value="human"/>
</dbReference>
<dbReference type="AGR" id="HGNC:17983"/>
<dbReference type="CTD" id="117194"/>
<dbReference type="DisGeNET" id="117194"/>
<dbReference type="GeneCards" id="MRGPRX2"/>
<dbReference type="HGNC" id="HGNC:17983">
    <property type="gene designation" value="MRGPRX2"/>
</dbReference>
<dbReference type="HPA" id="ENSG00000183695">
    <property type="expression patterns" value="Tissue enhanced (skin)"/>
</dbReference>
<dbReference type="MIM" id="607228">
    <property type="type" value="gene"/>
</dbReference>
<dbReference type="neXtProt" id="NX_Q96LB1"/>
<dbReference type="OpenTargets" id="ENSG00000183695"/>
<dbReference type="PharmGKB" id="PA142671335"/>
<dbReference type="VEuPathDB" id="HostDB:ENSG00000183695"/>
<dbReference type="eggNOG" id="ENOG502RTWA">
    <property type="taxonomic scope" value="Eukaryota"/>
</dbReference>
<dbReference type="GeneTree" id="ENSGT01030000234639"/>
<dbReference type="HOGENOM" id="CLU_009579_4_1_1"/>
<dbReference type="InParanoid" id="Q96LB1"/>
<dbReference type="OMA" id="WVNSSAN"/>
<dbReference type="OrthoDB" id="9631784at2759"/>
<dbReference type="PAN-GO" id="Q96LB1">
    <property type="GO annotations" value="2 GO annotations based on evolutionary models"/>
</dbReference>
<dbReference type="PhylomeDB" id="Q96LB1"/>
<dbReference type="TreeFam" id="TF336336"/>
<dbReference type="PathwayCommons" id="Q96LB1"/>
<dbReference type="SignaLink" id="Q96LB1"/>
<dbReference type="SIGNOR" id="Q96LB1"/>
<dbReference type="BioGRID-ORCS" id="117194">
    <property type="hits" value="8 hits in 1144 CRISPR screens"/>
</dbReference>
<dbReference type="GeneWiki" id="MRGPRX2"/>
<dbReference type="GenomeRNAi" id="117194"/>
<dbReference type="Pharos" id="Q96LB1">
    <property type="development level" value="Tchem"/>
</dbReference>
<dbReference type="PRO" id="PR:Q96LB1"/>
<dbReference type="Proteomes" id="UP000005640">
    <property type="component" value="Chromosome 11"/>
</dbReference>
<dbReference type="RNAct" id="Q96LB1">
    <property type="molecule type" value="protein"/>
</dbReference>
<dbReference type="Bgee" id="ENSG00000183695">
    <property type="expression patterns" value="Expressed in male germ line stem cell (sensu Vertebrata) in testis and 46 other cell types or tissues"/>
</dbReference>
<dbReference type="GO" id="GO:0016020">
    <property type="term" value="C:membrane"/>
    <property type="evidence" value="ECO:0000305"/>
    <property type="project" value="UniProtKB"/>
</dbReference>
<dbReference type="GO" id="GO:0005886">
    <property type="term" value="C:plasma membrane"/>
    <property type="evidence" value="ECO:0000318"/>
    <property type="project" value="GO_Central"/>
</dbReference>
<dbReference type="GO" id="GO:0004930">
    <property type="term" value="F:G protein-coupled receptor activity"/>
    <property type="evidence" value="ECO:0000314"/>
    <property type="project" value="UniProtKB"/>
</dbReference>
<dbReference type="GO" id="GO:1990595">
    <property type="term" value="F:mast cell secretagogue receptor activity"/>
    <property type="evidence" value="ECO:0000250"/>
    <property type="project" value="UniProtKB"/>
</dbReference>
<dbReference type="GO" id="GO:0042923">
    <property type="term" value="F:neuropeptide binding"/>
    <property type="evidence" value="ECO:0000353"/>
    <property type="project" value="UniProtKB"/>
</dbReference>
<dbReference type="GO" id="GO:0007186">
    <property type="term" value="P:G protein-coupled receptor signaling pathway"/>
    <property type="evidence" value="ECO:0000318"/>
    <property type="project" value="GO_Central"/>
</dbReference>
<dbReference type="GO" id="GO:0045576">
    <property type="term" value="P:mast cell activation"/>
    <property type="evidence" value="ECO:0000314"/>
    <property type="project" value="UniProtKB"/>
</dbReference>
<dbReference type="GO" id="GO:0043303">
    <property type="term" value="P:mast cell degranulation"/>
    <property type="evidence" value="ECO:0000314"/>
    <property type="project" value="UniProtKB"/>
</dbReference>
<dbReference type="GO" id="GO:0032467">
    <property type="term" value="P:positive regulation of cytokinesis"/>
    <property type="evidence" value="ECO:0000315"/>
    <property type="project" value="UniProtKB"/>
</dbReference>
<dbReference type="GO" id="GO:0019233">
    <property type="term" value="P:sensory perception of pain"/>
    <property type="evidence" value="ECO:0000303"/>
    <property type="project" value="UniProtKB"/>
</dbReference>
<dbReference type="GO" id="GO:0030431">
    <property type="term" value="P:sleep"/>
    <property type="evidence" value="ECO:0000303"/>
    <property type="project" value="UniProtKB"/>
</dbReference>
<dbReference type="CDD" id="cd15106">
    <property type="entry name" value="7tmA_MrgprX-like"/>
    <property type="match status" value="1"/>
</dbReference>
<dbReference type="FunFam" id="1.20.1070.10:FF:000140">
    <property type="entry name" value="Mas-related G-protein coupled receptor member X2"/>
    <property type="match status" value="1"/>
</dbReference>
<dbReference type="Gene3D" id="1.20.1070.10">
    <property type="entry name" value="Rhodopsin 7-helix transmembrane proteins"/>
    <property type="match status" value="1"/>
</dbReference>
<dbReference type="InterPro" id="IPR000276">
    <property type="entry name" value="GPCR_Rhodpsn"/>
</dbReference>
<dbReference type="InterPro" id="IPR017452">
    <property type="entry name" value="GPCR_Rhodpsn_7TM"/>
</dbReference>
<dbReference type="InterPro" id="IPR026234">
    <property type="entry name" value="MRGPCRFAMILY"/>
</dbReference>
<dbReference type="PANTHER" id="PTHR11334">
    <property type="entry name" value="MAS-RELATED G-PROTEIN COUPLED RECEPTOR"/>
    <property type="match status" value="1"/>
</dbReference>
<dbReference type="PANTHER" id="PTHR11334:SF29">
    <property type="entry name" value="MAS-RELATED G-PROTEIN COUPLED RECEPTOR MEMBER X2"/>
    <property type="match status" value="1"/>
</dbReference>
<dbReference type="Pfam" id="PF00001">
    <property type="entry name" value="7tm_1"/>
    <property type="match status" value="1"/>
</dbReference>
<dbReference type="PRINTS" id="PR00237">
    <property type="entry name" value="GPCRRHODOPSN"/>
</dbReference>
<dbReference type="PRINTS" id="PR02108">
    <property type="entry name" value="MRGPCRFAMILY"/>
</dbReference>
<dbReference type="SUPFAM" id="SSF81321">
    <property type="entry name" value="Family A G protein-coupled receptor-like"/>
    <property type="match status" value="1"/>
</dbReference>
<dbReference type="PROSITE" id="PS00237">
    <property type="entry name" value="G_PROTEIN_RECEP_F1_1"/>
    <property type="match status" value="1"/>
</dbReference>
<dbReference type="PROSITE" id="PS50262">
    <property type="entry name" value="G_PROTEIN_RECEP_F1_2"/>
    <property type="match status" value="1"/>
</dbReference>
<protein>
    <recommendedName>
        <fullName>Mas-related G-protein coupled receptor member X2</fullName>
    </recommendedName>
</protein>
<evidence type="ECO:0000250" key="1">
    <source>
        <dbReference type="UniProtKB" id="Q3KNA1"/>
    </source>
</evidence>
<evidence type="ECO:0000255" key="2"/>
<evidence type="ECO:0000255" key="3">
    <source>
        <dbReference type="PROSITE-ProRule" id="PRU00521"/>
    </source>
</evidence>
<evidence type="ECO:0000269" key="4">
    <source>
    </source>
</evidence>
<evidence type="ECO:0000269" key="5">
    <source>
    </source>
</evidence>
<evidence type="ECO:0000269" key="6">
    <source>
    </source>
</evidence>
<evidence type="ECO:0000269" key="7">
    <source>
    </source>
</evidence>
<evidence type="ECO:0000269" key="8">
    <source>
    </source>
</evidence>
<evidence type="ECO:0000269" key="9">
    <source>
    </source>
</evidence>
<evidence type="ECO:0000269" key="10">
    <source>
    </source>
</evidence>
<evidence type="ECO:0000269" key="11">
    <source>
    </source>
</evidence>
<evidence type="ECO:0000269" key="12">
    <source>
    </source>
</evidence>
<evidence type="ECO:0000269" key="13">
    <source ref="5"/>
</evidence>
<evidence type="ECO:0000305" key="14">
    <source>
    </source>
</evidence>
<evidence type="ECO:0007829" key="15">
    <source>
        <dbReference type="PDB" id="7S8L"/>
    </source>
</evidence>
<evidence type="ECO:0007829" key="16">
    <source>
        <dbReference type="PDB" id="7VDH"/>
    </source>
</evidence>
<evidence type="ECO:0007829" key="17">
    <source>
        <dbReference type="PDB" id="7VV5"/>
    </source>
</evidence>
<keyword id="KW-0002">3D-structure</keyword>
<keyword id="KW-1003">Cell membrane</keyword>
<keyword id="KW-0297">G-protein coupled receptor</keyword>
<keyword id="KW-0472">Membrane</keyword>
<keyword id="KW-0675">Receptor</keyword>
<keyword id="KW-1185">Reference proteome</keyword>
<keyword id="KW-0807">Transducer</keyword>
<keyword id="KW-0812">Transmembrane</keyword>
<keyword id="KW-1133">Transmembrane helix</keyword>
<accession>Q96LB1</accession>
<accession>B5B0C7</accession>
<accession>Q4QXW4</accession>
<accession>Q4QXW7</accession>
<accession>Q4QXX0</accession>
<accession>Q4QXX2</accession>
<accession>Q4QXX3</accession>
<accession>Q4QXX4</accession>
<accession>Q4QXX6</accession>
<accession>Q4QXX7</accession>
<accession>W8W3L5</accession>
<proteinExistence type="evidence at protein level"/>
<feature type="chain" id="PRO_0000069775" description="Mas-related G-protein coupled receptor member X2">
    <location>
        <begin position="1"/>
        <end position="330"/>
    </location>
</feature>
<feature type="topological domain" description="Extracellular" evidence="2">
    <location>
        <begin position="1"/>
        <end position="33"/>
    </location>
</feature>
<feature type="transmembrane region" description="Helical; Name=1" evidence="2">
    <location>
        <begin position="34"/>
        <end position="54"/>
    </location>
</feature>
<feature type="topological domain" description="Cytoplasmic" evidence="2">
    <location>
        <begin position="55"/>
        <end position="63"/>
    </location>
</feature>
<feature type="transmembrane region" description="Helical; Name=2" evidence="2">
    <location>
        <begin position="64"/>
        <end position="84"/>
    </location>
</feature>
<feature type="topological domain" description="Extracellular" evidence="2">
    <location>
        <begin position="85"/>
        <end position="96"/>
    </location>
</feature>
<feature type="transmembrane region" description="Helical; Name=3" evidence="2">
    <location>
        <begin position="97"/>
        <end position="117"/>
    </location>
</feature>
<feature type="topological domain" description="Cytoplasmic" evidence="2">
    <location>
        <begin position="118"/>
        <end position="144"/>
    </location>
</feature>
<feature type="transmembrane region" description="Helical; Name=4" evidence="2">
    <location>
        <begin position="145"/>
        <end position="165"/>
    </location>
</feature>
<feature type="topological domain" description="Extracellular" evidence="2">
    <location>
        <begin position="166"/>
        <end position="184"/>
    </location>
</feature>
<feature type="transmembrane region" description="Helical; Name=5" evidence="2">
    <location>
        <begin position="185"/>
        <end position="205"/>
    </location>
</feature>
<feature type="topological domain" description="Cytoplasmic" evidence="2">
    <location>
        <begin position="206"/>
        <end position="228"/>
    </location>
</feature>
<feature type="transmembrane region" description="Helical; Name=6" evidence="2">
    <location>
        <begin position="229"/>
        <end position="249"/>
    </location>
</feature>
<feature type="topological domain" description="Extracellular" evidence="2">
    <location>
        <begin position="250"/>
        <end position="264"/>
    </location>
</feature>
<feature type="transmembrane region" description="Helical; Name=7" evidence="2">
    <location>
        <begin position="265"/>
        <end position="285"/>
    </location>
</feature>
<feature type="topological domain" description="Cytoplasmic" evidence="2">
    <location>
        <begin position="286"/>
        <end position="330"/>
    </location>
</feature>
<feature type="sequence variant" id="VAR_024739" description="In dbSNP:rs11024970." evidence="6">
    <original>N</original>
    <variation>H</variation>
    <location>
        <position position="16"/>
    </location>
</feature>
<feature type="sequence variant" id="VAR_049418" description="In dbSNP:rs11823569.">
    <original>V</original>
    <variation>I</variation>
    <location>
        <position position="43"/>
    </location>
</feature>
<feature type="sequence variant" id="VAR_019433" description="In dbSNP:rs10833049." evidence="6 13">
    <original>N</original>
    <variation>S</variation>
    <location>
        <position position="62"/>
    </location>
</feature>
<feature type="sequence variant" id="VAR_024740" description="In dbSNP:rs79763999." evidence="6">
    <original>F</original>
    <variation>L</variation>
    <location>
        <position position="78"/>
    </location>
</feature>
<feature type="turn" evidence="17">
    <location>
        <begin position="24"/>
        <end position="26"/>
    </location>
</feature>
<feature type="strand" evidence="17">
    <location>
        <begin position="28"/>
        <end position="30"/>
    </location>
</feature>
<feature type="helix" evidence="15">
    <location>
        <begin position="31"/>
        <end position="56"/>
    </location>
</feature>
<feature type="helix" evidence="15">
    <location>
        <begin position="65"/>
        <end position="94"/>
    </location>
</feature>
<feature type="helix" evidence="15">
    <location>
        <begin position="104"/>
        <end position="132"/>
    </location>
</feature>
<feature type="helix" evidence="15">
    <location>
        <begin position="134"/>
        <end position="139"/>
    </location>
</feature>
<feature type="helix" evidence="15">
    <location>
        <begin position="145"/>
        <end position="166"/>
    </location>
</feature>
<feature type="turn" evidence="15">
    <location>
        <begin position="167"/>
        <end position="169"/>
    </location>
</feature>
<feature type="strand" evidence="15">
    <location>
        <begin position="170"/>
        <end position="173"/>
    </location>
</feature>
<feature type="helix" evidence="15">
    <location>
        <begin position="178"/>
        <end position="210"/>
    </location>
</feature>
<feature type="strand" evidence="16">
    <location>
        <begin position="214"/>
        <end position="216"/>
    </location>
</feature>
<feature type="helix" evidence="15">
    <location>
        <begin position="219"/>
        <end position="244"/>
    </location>
</feature>
<feature type="helix" evidence="15">
    <location>
        <begin position="246"/>
        <end position="249"/>
    </location>
</feature>
<feature type="strand" evidence="16">
    <location>
        <begin position="253"/>
        <end position="256"/>
    </location>
</feature>
<feature type="helix" evidence="15">
    <location>
        <begin position="257"/>
        <end position="279"/>
    </location>
</feature>
<feature type="turn" evidence="15">
    <location>
        <begin position="280"/>
        <end position="283"/>
    </location>
</feature>
<feature type="helix" evidence="17">
    <location>
        <begin position="285"/>
        <end position="287"/>
    </location>
</feature>
<sequence length="330" mass="37099">MDPTTPAWGTESTTVNGNDQALLLLCGKETLIPVFLILFIALVGLVGNGFVLWLLGFRMRRNAFSVYVLSLAGADFLFLCFQIINCLVYLSNFFCSISINFPSFFTTVMTCAYLAGLSMLSTVSTERCLSVLWPIWYRCRRPRHLSAVVCVLLWALSLLLSILEGKFCGFLFSDGDSGWCQTFDFITAAWLIFLFMVLCGSSLALLVRILCGSRGLPLTRLYLTILLTVLVFLLCGLPFGIQWFLILWIWKDSDVLFCHIHPVSVVLSSLNSSANPIIYFFVGSFRKQWRLQQPILKLALQRALQDIAEVDHSEGCFRQGTPEMSRSSLV</sequence>
<gene>
    <name type="primary">MRGPRX2</name>
    <name type="synonym">MRGX2</name>
</gene>
<reference key="1">
    <citation type="journal article" date="2001" name="Cell">
        <title>A diverse family of GPCRs expressed in specific subsets of nociceptive sensory neurons.</title>
        <authorList>
            <person name="Dong X."/>
            <person name="Han S.-K."/>
            <person name="Zylka M.J."/>
            <person name="Simon M.I."/>
            <person name="Anderson D.J."/>
        </authorList>
    </citation>
    <scope>NUCLEOTIDE SEQUENCE [GENOMIC DNA]</scope>
</reference>
<reference key="2">
    <citation type="journal article" date="2005" name="Gene">
        <title>Adaptive evolution of MRGX2, a human sensory neuron specific gene involved in nociception.</title>
        <authorList>
            <person name="Yang S."/>
            <person name="Liu Y."/>
            <person name="Lin A.A."/>
            <person name="Cavalli-Sforza L.L."/>
            <person name="Zhao Z."/>
            <person name="Su B."/>
        </authorList>
    </citation>
    <scope>NUCLEOTIDE SEQUENCE [GENOMIC DNA]</scope>
    <scope>VARIANTS HIS-16; SER-62 AND LEU-78</scope>
</reference>
<reference key="3">
    <citation type="journal article" date="2014" name="Gene">
        <title>Comparative genomic analysis of eutherian Mas-related G protein-coupled receptor genes.</title>
        <authorList>
            <person name="Premzl M."/>
        </authorList>
    </citation>
    <scope>NUCLEOTIDE SEQUENCE [GENOMIC DNA]</scope>
</reference>
<reference key="4">
    <citation type="submission" date="2001-07" db="EMBL/GenBank/DDBJ databases">
        <title>Genome-wide discovery and analysis of human seven transmembrane helix receptor genes.</title>
        <authorList>
            <person name="Suwa M."/>
            <person name="Sato T."/>
            <person name="Okouchi I."/>
            <person name="Arita M."/>
            <person name="Futami K."/>
            <person name="Matsumoto S."/>
            <person name="Tsutsumi S."/>
            <person name="Aburatani H."/>
            <person name="Asai K."/>
            <person name="Akiyama Y."/>
        </authorList>
    </citation>
    <scope>NUCLEOTIDE SEQUENCE [GENOMIC DNA]</scope>
</reference>
<reference key="5">
    <citation type="submission" date="2008-07" db="EMBL/GenBank/DDBJ databases">
        <title>Isolation of genomic DNA coding for human MAS-related GPR, member X2 (MRGPRX2).</title>
        <authorList>
            <person name="Martin A.L."/>
            <person name="Kaighin V.A."/>
            <person name="Aronstam R.S."/>
        </authorList>
    </citation>
    <scope>NUCLEOTIDE SEQUENCE [GENOMIC DNA]</scope>
    <scope>VARIANT SER-62</scope>
</reference>
<reference key="6">
    <citation type="journal article" date="2002" name="FEBS Lett.">
        <title>Identification of G protein-coupled receptor genes from the human genome sequence.</title>
        <authorList>
            <person name="Takeda S."/>
            <person name="Kadowaki S."/>
            <person name="Haga T."/>
            <person name="Takaesu H."/>
            <person name="Mitaku S."/>
        </authorList>
    </citation>
    <scope>NUCLEOTIDE SEQUENCE [LARGE SCALE GENOMIC DNA]</scope>
</reference>
<reference key="7">
    <citation type="submission" date="2005-07" db="EMBL/GenBank/DDBJ databases">
        <authorList>
            <person name="Mural R.J."/>
            <person name="Istrail S."/>
            <person name="Sutton G.G."/>
            <person name="Florea L."/>
            <person name="Halpern A.L."/>
            <person name="Mobarry C.M."/>
            <person name="Lippert R."/>
            <person name="Walenz B."/>
            <person name="Shatkay H."/>
            <person name="Dew I."/>
            <person name="Miller J.R."/>
            <person name="Flanigan M.J."/>
            <person name="Edwards N.J."/>
            <person name="Bolanos R."/>
            <person name="Fasulo D."/>
            <person name="Halldorsson B.V."/>
            <person name="Hannenhalli S."/>
            <person name="Turner R."/>
            <person name="Yooseph S."/>
            <person name="Lu F."/>
            <person name="Nusskern D.R."/>
            <person name="Shue B.C."/>
            <person name="Zheng X.H."/>
            <person name="Zhong F."/>
            <person name="Delcher A.L."/>
            <person name="Huson D.H."/>
            <person name="Kravitz S.A."/>
            <person name="Mouchard L."/>
            <person name="Reinert K."/>
            <person name="Remington K.A."/>
            <person name="Clark A.G."/>
            <person name="Waterman M.S."/>
            <person name="Eichler E.E."/>
            <person name="Adams M.D."/>
            <person name="Hunkapiller M.W."/>
            <person name="Myers E.W."/>
            <person name="Venter J.C."/>
        </authorList>
    </citation>
    <scope>NUCLEOTIDE SEQUENCE [LARGE SCALE GENOMIC DNA]</scope>
</reference>
<reference key="8">
    <citation type="journal article" date="2004" name="Genome Res.">
        <title>The status, quality, and expansion of the NIH full-length cDNA project: the Mammalian Gene Collection (MGC).</title>
        <authorList>
            <consortium name="The MGC Project Team"/>
        </authorList>
    </citation>
    <scope>NUCLEOTIDE SEQUENCE [LARGE SCALE MRNA]</scope>
    <source>
        <tissue>Brain</tissue>
    </source>
</reference>
<reference key="9">
    <citation type="journal article" date="2003" name="J. Biol. Chem.">
        <title>MrgX2 is a high potency cortistatin receptor expressed in dorsal root ganglion.</title>
        <authorList>
            <person name="Robas N."/>
            <person name="Mead E."/>
            <person name="Fidock M."/>
        </authorList>
    </citation>
    <scope>TISSUE SPECIFICITY</scope>
    <scope>FUNCTION</scope>
</reference>
<reference key="10">
    <citation type="journal article" date="2005" name="Biochem. Biophys. Res. Commun.">
        <title>Identification of MrgX2 as a human G-protein-coupled receptor for proadrenomedullin N-terminal peptides.</title>
        <authorList>
            <person name="Kamohara M."/>
            <person name="Matsuo A."/>
            <person name="Takasaki J."/>
            <person name="Kohda M."/>
            <person name="Matsumoto M."/>
            <person name="Matsumoto S."/>
            <person name="Soga T."/>
            <person name="Hiyama H."/>
            <person name="Kobori M."/>
            <person name="Katou M."/>
        </authorList>
    </citation>
    <scope>FUNCTION</scope>
</reference>
<reference key="11">
    <citation type="journal article" date="2005" name="J. Pathol.">
        <title>Expression of cortistatin and MrgX2, a specific cortistatin receptor, in human neuroendocrine tissues and related tumours.</title>
        <authorList>
            <person name="Allia E."/>
            <person name="Tarabra E."/>
            <person name="Volante M."/>
            <person name="Cerrato M."/>
            <person name="Ghigo E."/>
            <person name="Muccioli G."/>
            <person name="Papotti M."/>
        </authorList>
    </citation>
    <scope>TISSUE SPECIFICITY</scope>
</reference>
<reference key="12">
    <citation type="journal article" date="2011" name="J. Biol. Chem.">
        <title>Mas-related gene X2 (MrgX2) is a novel G protein-coupled receptor for the antimicrobial peptide LL-37 in human mast cells: resistance to receptor phosphorylation, desensitization, and internalization.</title>
        <authorList>
            <person name="Subramanian H."/>
            <person name="Gupta K."/>
            <person name="Guo Q."/>
            <person name="Price R."/>
            <person name="Ali H."/>
        </authorList>
    </citation>
    <scope>FUNCTION</scope>
</reference>
<reference key="13">
    <citation type="journal article" date="2011" name="Mol. Pharmacol.">
        <title>PMX-53 as a dual CD88 antagonist and an agonist for Mas-related gene 2 (MrgX2) in human mast cells.</title>
        <authorList>
            <person name="Subramanian H."/>
            <person name="Kashem S.W."/>
            <person name="Collington S.J."/>
            <person name="Qu H."/>
            <person name="Lambris J.D."/>
            <person name="Ali H."/>
        </authorList>
    </citation>
    <scope>FUNCTION</scope>
</reference>
<reference key="14">
    <citation type="journal article" date="2013" name="J. Immunol.">
        <title>beta-Defensins activate human mast cells via Mas-related gene X2.</title>
        <authorList>
            <person name="Subramanian H."/>
            <person name="Gupta K."/>
            <person name="Lee D."/>
            <person name="Bayir A.K."/>
            <person name="Ahn H."/>
            <person name="Ali H."/>
        </authorList>
    </citation>
    <scope>FUNCTION</scope>
</reference>
<reference key="15">
    <citation type="journal article" date="2014" name="Bioorg. Med. Chem. Lett.">
        <title>Complanadine A, a selective agonist for the Mas-related G protein-coupled receptor X2.</title>
        <authorList>
            <person name="Johnson T."/>
            <person name="Siegel D."/>
        </authorList>
    </citation>
    <scope>FUNCTION</scope>
</reference>
<reference key="16">
    <citation type="journal article" date="2015" name="Nature">
        <title>Identification of a mast-cell-specific receptor crucial for pseudo-allergic drug reactions.</title>
        <authorList>
            <person name="McNeil B.D."/>
            <person name="Pundir P."/>
            <person name="Meeker S."/>
            <person name="Han L."/>
            <person name="Undem B.J."/>
            <person name="Kulka M."/>
            <person name="Dong X."/>
        </authorList>
    </citation>
    <scope>FUNCTION</scope>
</reference>
<organism>
    <name type="scientific">Homo sapiens</name>
    <name type="common">Human</name>
    <dbReference type="NCBI Taxonomy" id="9606"/>
    <lineage>
        <taxon>Eukaryota</taxon>
        <taxon>Metazoa</taxon>
        <taxon>Chordata</taxon>
        <taxon>Craniata</taxon>
        <taxon>Vertebrata</taxon>
        <taxon>Euteleostomi</taxon>
        <taxon>Mammalia</taxon>
        <taxon>Eutheria</taxon>
        <taxon>Euarchontoglires</taxon>
        <taxon>Primates</taxon>
        <taxon>Haplorrhini</taxon>
        <taxon>Catarrhini</taxon>
        <taxon>Hominidae</taxon>
        <taxon>Homo</taxon>
    </lineage>
</organism>